<organism>
    <name type="scientific">Drosophila melanogaster</name>
    <name type="common">Fruit fly</name>
    <dbReference type="NCBI Taxonomy" id="7227"/>
    <lineage>
        <taxon>Eukaryota</taxon>
        <taxon>Metazoa</taxon>
        <taxon>Ecdysozoa</taxon>
        <taxon>Arthropoda</taxon>
        <taxon>Hexapoda</taxon>
        <taxon>Insecta</taxon>
        <taxon>Pterygota</taxon>
        <taxon>Neoptera</taxon>
        <taxon>Endopterygota</taxon>
        <taxon>Diptera</taxon>
        <taxon>Brachycera</taxon>
        <taxon>Muscomorpha</taxon>
        <taxon>Ephydroidea</taxon>
        <taxon>Drosophilidae</taxon>
        <taxon>Drosophila</taxon>
        <taxon>Sophophora</taxon>
    </lineage>
</organism>
<evidence type="ECO:0000250" key="1"/>
<evidence type="ECO:0000256" key="2">
    <source>
        <dbReference type="SAM" id="MobiDB-lite"/>
    </source>
</evidence>
<evidence type="ECO:0000269" key="3">
    <source>
    </source>
</evidence>
<evidence type="ECO:0000269" key="4">
    <source>
    </source>
</evidence>
<evidence type="ECO:0000269" key="5">
    <source>
    </source>
</evidence>
<evidence type="ECO:0000269" key="6">
    <source>
    </source>
</evidence>
<evidence type="ECO:0000269" key="7">
    <source>
    </source>
</evidence>
<evidence type="ECO:0000269" key="8">
    <source>
    </source>
</evidence>
<evidence type="ECO:0000269" key="9">
    <source>
    </source>
</evidence>
<evidence type="ECO:0000269" key="10">
    <source>
    </source>
</evidence>
<evidence type="ECO:0000269" key="11">
    <source>
    </source>
</evidence>
<evidence type="ECO:0000269" key="12">
    <source>
    </source>
</evidence>
<evidence type="ECO:0000269" key="13">
    <source>
    </source>
</evidence>
<evidence type="ECO:0000303" key="14">
    <source>
    </source>
</evidence>
<evidence type="ECO:0000303" key="15">
    <source>
    </source>
</evidence>
<evidence type="ECO:0000305" key="16"/>
<evidence type="ECO:0000312" key="17">
    <source>
        <dbReference type="FlyBase" id="FBgn0015805"/>
    </source>
</evidence>
<comment type="function">
    <text evidence="3 4 7 8 12 13">Catalyzes the deacetylation of lysine residues on the N-terminal part of the core histones (H2A, H2B, H3 and H4) (PubMed:11571273, PubMed:12408863, PubMed:28245922). Histone deacetylation may constitute a tag for epigenetic repression and plays an important role in transcriptional regulation, cell cycle progression and developmental events (PubMed:11571273, PubMed:15306652, PubMed:15545624, PubMed:8955276). For instance, deacetylation of histone H3 may be a prerequisite for the subsequent recruitment of the histone methyltransferase Su(var)3-9 to histones (PubMed:11571273). Involved in position-effect variegation (PEV) (PubMed:11571273). In the larval brain, part of a regulatory network including the transcriptional repressors klu, dpn and E(spl)mgamma-HLH which is required for type II neuroblast self-renewal and for maintaining erm in an inactive state in intermediate neural progenitors (INP) (PubMed:28245922).</text>
</comment>
<comment type="catalytic activity">
    <reaction evidence="3 12">
        <text>N(6)-acetyl-L-lysyl-[histone] + H2O = L-lysyl-[histone] + acetate</text>
        <dbReference type="Rhea" id="RHEA:58196"/>
        <dbReference type="Rhea" id="RHEA-COMP:9845"/>
        <dbReference type="Rhea" id="RHEA-COMP:11338"/>
        <dbReference type="ChEBI" id="CHEBI:15377"/>
        <dbReference type="ChEBI" id="CHEBI:29969"/>
        <dbReference type="ChEBI" id="CHEBI:30089"/>
        <dbReference type="ChEBI" id="CHEBI:61930"/>
        <dbReference type="EC" id="3.5.1.98"/>
    </reaction>
</comment>
<comment type="subunit">
    <text evidence="3 4 5 6 7 8 9 11">Component of a form of the Esc/E(z) complex present specifically during early embryogenesis which is composed of Caf1-55, esc, E(z), Su(z)12, Pcl and HDAC1 (PubMed:12408863, PubMed:12533794, PubMed:12697833). The Esc/E(z) complex may also associate with Pcl and HDAC1 during early embryogenesis (PubMed:12697833). This complex is distinct from the PRC1 complex, which contains many other PcG proteins like Pc, Ph, Psc, Su(z)2 (PubMed:12533794). The 2 complexes however cooperate and interact together during the first 3 hours of development to establish PcG silencing (PubMed:12533794). Interacts with the histone methyltransferase Su(var)3-9 (PubMed:11571273). Component of a complex that contains at least HDAC1, CoRest and Su(var)3-3/Hdm (PubMed:15306652). Component of the DREAM complex at least composed of Myb, Caf1-55, mip40, mip120, mip130, E2f2, Dp, Rbf, Rbf2, lin-52, HDAC1 and l(3)mbt (PubMed:15545624). Interacts with the chromatin-remodeler Mi-2 (PubMed:18250149). Interacts with Rrp6 (PubMed:26389589).</text>
</comment>
<comment type="interaction">
    <interactant intactId="EBI-302197">
        <id>Q94517</id>
    </interactant>
    <interactant intactId="EBI-75924">
        <id>Q24572</id>
        <label>Caf1-55</label>
    </interactant>
    <organismsDiffer>false</organismsDiffer>
    <experiments>4</experiments>
</comment>
<comment type="interaction">
    <interactant intactId="EBI-302197">
        <id>Q94517</id>
    </interactant>
    <interactant intactId="EBI-112315">
        <id>P42124</id>
        <label>E(z)</label>
    </interactant>
    <organismsDiffer>false</organismsDiffer>
    <experiments>9</experiments>
</comment>
<comment type="interaction">
    <interactant intactId="EBI-302197">
        <id>Q94517</id>
    </interactant>
    <interactant intactId="EBI-88911">
        <id>Q24338</id>
        <label>esc</label>
    </interactant>
    <organismsDiffer>false</organismsDiffer>
    <experiments>11</experiments>
</comment>
<comment type="interaction">
    <interactant intactId="EBI-302197">
        <id>Q94517</id>
    </interactant>
    <interactant intactId="EBI-75953">
        <id>A1Z9E2</id>
        <label>mip120</label>
    </interactant>
    <organismsDiffer>false</organismsDiffer>
    <experiments>2</experiments>
</comment>
<comment type="interaction">
    <interactant intactId="EBI-302197">
        <id>Q94517</id>
    </interactant>
    <interactant intactId="EBI-430086">
        <id>Q24459</id>
        <label>Pcl</label>
    </interactant>
    <organismsDiffer>false</organismsDiffer>
    <experiments>5</experiments>
</comment>
<comment type="subcellular location">
    <subcellularLocation>
        <location evidence="5 6">Nucleus</location>
    </subcellularLocation>
</comment>
<comment type="disruption phenotype">
    <text evidence="12">RNAi-mediated knockdown results in loss of type II neuroblasts.</text>
</comment>
<comment type="similarity">
    <text evidence="16">Belongs to the histone deacetylase family. HD type 1 subfamily.</text>
</comment>
<sequence>MQSHSKKRVCYYYDSDIGNYYYGQGHPMKPHRIRMTHNLLLNYGLYRKMEIYRPHKATADEMTKFHSDEYVRFLRSIRPDNMSEYNKQMQRFNVGEDCPVFDGLYEFCQLSAGGSVAAAVKLNKQASEICINWGGGLHHAKKSEASGFCYVNDIVLGILELLKYHQRVLYIDIDVHHGDGVEEAFYTTDRVMTVSFHKYGEYFPGTGDLRDIGAGKGKYYAVNIPLRDGMDDDAYESIFVPIISKVMETFQPAAVVLQCGADSLTGDRLGCFNLTVKGHGKCVEFVKKYNLPFLMVGGGGYTIRNVSRCWTYETSVALAVEIANELPYNDYFEYFGPDFKLHISPSNMTNQNTSEYLEKIKNRLFENLRMLPHAPGVQIQAIPEDAINDESDDEDKVDKDDRLPQSDKDKRIVPENEYSDSEDEGEGGRRDNRSYKGQRKRPRLDKDTNSNKASSETSSEIKDEKEKGDGADGEESTASNTNSNNNSNNKSDNDAGATANAGSGSGSGSGAGAKGAKENNI</sequence>
<dbReference type="EC" id="3.5.1.98" evidence="3 12"/>
<dbReference type="EMBL" id="Y09258">
    <property type="protein sequence ID" value="CAA70455.1"/>
    <property type="molecule type" value="mRNA"/>
</dbReference>
<dbReference type="EMBL" id="AF086715">
    <property type="protein sequence ID" value="AAC61494.1"/>
    <property type="molecule type" value="Genomic_DNA"/>
</dbReference>
<dbReference type="EMBL" id="AF026949">
    <property type="protein sequence ID" value="AAC23917.1"/>
    <property type="molecule type" value="mRNA"/>
</dbReference>
<dbReference type="EMBL" id="AE014296">
    <property type="protein sequence ID" value="AAF47924.1"/>
    <property type="molecule type" value="Genomic_DNA"/>
</dbReference>
<dbReference type="EMBL" id="AY058487">
    <property type="protein sequence ID" value="AAL13716.1"/>
    <property type="molecule type" value="mRNA"/>
</dbReference>
<dbReference type="RefSeq" id="NP_647918.2">
    <property type="nucleotide sequence ID" value="NM_139661.4"/>
</dbReference>
<dbReference type="SMR" id="Q94517"/>
<dbReference type="BioGRID" id="64037">
    <property type="interactions" value="85"/>
</dbReference>
<dbReference type="ComplexPortal" id="CPX-2355">
    <property type="entry name" value="Mi2/NuRD nucleosome remodeling and deacetylase complex"/>
</dbReference>
<dbReference type="DIP" id="DIP-29512N"/>
<dbReference type="FunCoup" id="Q94517">
    <property type="interactions" value="1835"/>
</dbReference>
<dbReference type="IntAct" id="Q94517">
    <property type="interactions" value="26"/>
</dbReference>
<dbReference type="MINT" id="Q94517"/>
<dbReference type="STRING" id="7227.FBpp0073173"/>
<dbReference type="iPTMnet" id="Q94517"/>
<dbReference type="PaxDb" id="7227-FBpp0073173"/>
<dbReference type="DNASU" id="38565"/>
<dbReference type="EnsemblMetazoa" id="FBtr0073317">
    <property type="protein sequence ID" value="FBpp0073173"/>
    <property type="gene ID" value="FBgn0015805"/>
</dbReference>
<dbReference type="GeneID" id="38565"/>
<dbReference type="KEGG" id="dme:Dmel_CG7471"/>
<dbReference type="AGR" id="FB:FBgn0015805"/>
<dbReference type="CTD" id="3065"/>
<dbReference type="FlyBase" id="FBgn0015805">
    <property type="gene designation" value="HDAC1"/>
</dbReference>
<dbReference type="VEuPathDB" id="VectorBase:FBgn0015805"/>
<dbReference type="eggNOG" id="KOG1342">
    <property type="taxonomic scope" value="Eukaryota"/>
</dbReference>
<dbReference type="GeneTree" id="ENSGT00940000155725"/>
<dbReference type="HOGENOM" id="CLU_007727_7_4_1"/>
<dbReference type="InParanoid" id="Q94517"/>
<dbReference type="OMA" id="GKIMEWY"/>
<dbReference type="OrthoDB" id="1918432at2759"/>
<dbReference type="PhylomeDB" id="Q94517"/>
<dbReference type="Reactome" id="R-DME-1538133">
    <property type="pathway name" value="G0 and Early G1"/>
</dbReference>
<dbReference type="Reactome" id="R-DME-201722">
    <property type="pathway name" value="Formation of the beta-catenin:TCF transactivating complex"/>
</dbReference>
<dbReference type="Reactome" id="R-DME-209394">
    <property type="pathway name" value="Transcriptional activtion and repression of REL-68 target genes"/>
</dbReference>
<dbReference type="Reactome" id="R-DME-2173795">
    <property type="pathway name" value="Downregulation of SMAD2/3:SMAD4 transcriptional activity"/>
</dbReference>
<dbReference type="Reactome" id="R-DME-3214815">
    <property type="pathway name" value="HDACs deacetylate histones"/>
</dbReference>
<dbReference type="Reactome" id="R-DME-350054">
    <property type="pathway name" value="Notch-HLH transcription pathway"/>
</dbReference>
<dbReference type="Reactome" id="R-DME-3769402">
    <property type="pathway name" value="Deactivation of the beta-catenin transactivating complex"/>
</dbReference>
<dbReference type="Reactome" id="R-DME-6804758">
    <property type="pathway name" value="Regulation of TP53 Activity through Acetylation"/>
</dbReference>
<dbReference type="Reactome" id="R-DME-8936459">
    <property type="pathway name" value="RUNX1 regulates genes involved in megakaryocyte differentiation and platelet function"/>
</dbReference>
<dbReference type="Reactome" id="R-DME-8943724">
    <property type="pathway name" value="Regulation of PTEN gene transcription"/>
</dbReference>
<dbReference type="Reactome" id="R-DME-9018519">
    <property type="pathway name" value="Estrogen-dependent gene expression"/>
</dbReference>
<dbReference type="Reactome" id="R-DME-9701898">
    <property type="pathway name" value="STAT3 nuclear events downstream of ALK signaling"/>
</dbReference>
<dbReference type="Reactome" id="R-DME-9824594">
    <property type="pathway name" value="Regulation of MITF-M-dependent genes involved in apoptosis"/>
</dbReference>
<dbReference type="Reactome" id="R-DME-9825892">
    <property type="pathway name" value="Regulation of MITF-M-dependent genes involved in cell cycle and proliferation"/>
</dbReference>
<dbReference type="Reactome" id="R-DME-983231">
    <property type="pathway name" value="Factors involved in megakaryocyte development and platelet production"/>
</dbReference>
<dbReference type="SignaLink" id="Q94517"/>
<dbReference type="BioGRID-ORCS" id="38565">
    <property type="hits" value="1 hit in 3 CRISPR screens"/>
</dbReference>
<dbReference type="ChiTaRS" id="HDAC1">
    <property type="organism name" value="fly"/>
</dbReference>
<dbReference type="GenomeRNAi" id="38565"/>
<dbReference type="PRO" id="PR:Q94517"/>
<dbReference type="Proteomes" id="UP000000803">
    <property type="component" value="Chromosome 3L"/>
</dbReference>
<dbReference type="Bgee" id="FBgn0015805">
    <property type="expression patterns" value="Expressed in eye disc (Drosophila) and 119 other cell types or tissues"/>
</dbReference>
<dbReference type="ExpressionAtlas" id="Q94517">
    <property type="expression patterns" value="baseline and differential"/>
</dbReference>
<dbReference type="GO" id="GO:0000785">
    <property type="term" value="C:chromatin"/>
    <property type="evidence" value="ECO:0000314"/>
    <property type="project" value="FlyBase"/>
</dbReference>
<dbReference type="GO" id="GO:0005737">
    <property type="term" value="C:cytoplasm"/>
    <property type="evidence" value="ECO:0000304"/>
    <property type="project" value="UniProtKB"/>
</dbReference>
<dbReference type="GO" id="GO:0035098">
    <property type="term" value="C:ESC/E(Z) complex"/>
    <property type="evidence" value="ECO:0000314"/>
    <property type="project" value="FlyBase"/>
</dbReference>
<dbReference type="GO" id="GO:0000118">
    <property type="term" value="C:histone deacetylase complex"/>
    <property type="evidence" value="ECO:0000304"/>
    <property type="project" value="UniProtKB"/>
</dbReference>
<dbReference type="GO" id="GO:0031523">
    <property type="term" value="C:Myb complex"/>
    <property type="evidence" value="ECO:0000314"/>
    <property type="project" value="FlyBase"/>
</dbReference>
<dbReference type="GO" id="GO:0005654">
    <property type="term" value="C:nucleoplasm"/>
    <property type="evidence" value="ECO:0000304"/>
    <property type="project" value="Reactome"/>
</dbReference>
<dbReference type="GO" id="GO:0005634">
    <property type="term" value="C:nucleus"/>
    <property type="evidence" value="ECO:0000314"/>
    <property type="project" value="FlyBase"/>
</dbReference>
<dbReference type="GO" id="GO:0016581">
    <property type="term" value="C:NuRD complex"/>
    <property type="evidence" value="ECO:0000353"/>
    <property type="project" value="FlyBase"/>
</dbReference>
<dbReference type="GO" id="GO:0005700">
    <property type="term" value="C:polytene chromosome"/>
    <property type="evidence" value="ECO:0000314"/>
    <property type="project" value="FlyBase"/>
</dbReference>
<dbReference type="GO" id="GO:0005705">
    <property type="term" value="C:polytene chromosome interband"/>
    <property type="evidence" value="ECO:0000314"/>
    <property type="project" value="FlyBase"/>
</dbReference>
<dbReference type="GO" id="GO:0070822">
    <property type="term" value="C:Sin3-type complex"/>
    <property type="evidence" value="ECO:0000314"/>
    <property type="project" value="FlyBase"/>
</dbReference>
<dbReference type="GO" id="GO:0017053">
    <property type="term" value="C:transcription repressor complex"/>
    <property type="evidence" value="ECO:0000353"/>
    <property type="project" value="FlyBase"/>
</dbReference>
<dbReference type="GO" id="GO:0140297">
    <property type="term" value="F:DNA-binding transcription factor binding"/>
    <property type="evidence" value="ECO:0000304"/>
    <property type="project" value="UniProtKB"/>
</dbReference>
<dbReference type="GO" id="GO:0004407">
    <property type="term" value="F:histone deacetylase activity"/>
    <property type="evidence" value="ECO:0000314"/>
    <property type="project" value="FlyBase"/>
</dbReference>
<dbReference type="GO" id="GO:0140937">
    <property type="term" value="F:histone H4K12 deacetylase activity, hydrolytic mechanism"/>
    <property type="evidence" value="ECO:0000314"/>
    <property type="project" value="FlyBase"/>
</dbReference>
<dbReference type="GO" id="GO:0034739">
    <property type="term" value="F:histone H4K16 deacetylase activity, hydrolytic mechanism"/>
    <property type="evidence" value="ECO:0000314"/>
    <property type="project" value="FlyBase"/>
</dbReference>
<dbReference type="GO" id="GO:0180032">
    <property type="term" value="F:histone H4K5 deacetylase activity, hydrolytic mechanism"/>
    <property type="evidence" value="ECO:0000314"/>
    <property type="project" value="FlyBase"/>
</dbReference>
<dbReference type="GO" id="GO:0180033">
    <property type="term" value="F:histone H4K8 deacetylase activity, hydrolytic mechanism"/>
    <property type="evidence" value="ECO:0000314"/>
    <property type="project" value="FlyBase"/>
</dbReference>
<dbReference type="GO" id="GO:0003714">
    <property type="term" value="F:transcription corepressor activity"/>
    <property type="evidence" value="ECO:0000353"/>
    <property type="project" value="FlyBase"/>
</dbReference>
<dbReference type="GO" id="GO:0007350">
    <property type="term" value="P:blastoderm segmentation"/>
    <property type="evidence" value="ECO:0000315"/>
    <property type="project" value="FlyBase"/>
</dbReference>
<dbReference type="GO" id="GO:0006325">
    <property type="term" value="P:chromatin organization"/>
    <property type="evidence" value="ECO:0000304"/>
    <property type="project" value="UniProtKB"/>
</dbReference>
<dbReference type="GO" id="GO:0030261">
    <property type="term" value="P:chromosome condensation"/>
    <property type="evidence" value="ECO:0000315"/>
    <property type="project" value="FlyBase"/>
</dbReference>
<dbReference type="GO" id="GO:0070983">
    <property type="term" value="P:dendrite guidance"/>
    <property type="evidence" value="ECO:0000315"/>
    <property type="project" value="FlyBase"/>
</dbReference>
<dbReference type="GO" id="GO:0008340">
    <property type="term" value="P:determination of adult lifespan"/>
    <property type="evidence" value="ECO:0000315"/>
    <property type="project" value="FlyBase"/>
</dbReference>
<dbReference type="GO" id="GO:0031507">
    <property type="term" value="P:heterochromatin formation"/>
    <property type="evidence" value="ECO:0000315"/>
    <property type="project" value="FlyBase"/>
</dbReference>
<dbReference type="GO" id="GO:0050771">
    <property type="term" value="P:negative regulation of axonogenesis"/>
    <property type="evidence" value="ECO:0000315"/>
    <property type="project" value="FlyBase"/>
</dbReference>
<dbReference type="GO" id="GO:0045892">
    <property type="term" value="P:negative regulation of DNA-templated transcription"/>
    <property type="evidence" value="ECO:0000316"/>
    <property type="project" value="FlyBase"/>
</dbReference>
<dbReference type="GO" id="GO:0010629">
    <property type="term" value="P:negative regulation of gene expression"/>
    <property type="evidence" value="ECO:0000315"/>
    <property type="project" value="UniProtKB"/>
</dbReference>
<dbReference type="GO" id="GO:0045814">
    <property type="term" value="P:negative regulation of gene expression, epigenetic"/>
    <property type="evidence" value="ECO:0000315"/>
    <property type="project" value="UniProtKB"/>
</dbReference>
<dbReference type="GO" id="GO:2001229">
    <property type="term" value="P:negative regulation of response to gamma radiation"/>
    <property type="evidence" value="ECO:0000315"/>
    <property type="project" value="FlyBase"/>
</dbReference>
<dbReference type="GO" id="GO:0045879">
    <property type="term" value="P:negative regulation of smoothened signaling pathway"/>
    <property type="evidence" value="ECO:0000315"/>
    <property type="project" value="FlyBase"/>
</dbReference>
<dbReference type="GO" id="GO:0000122">
    <property type="term" value="P:negative regulation of transcription by RNA polymerase II"/>
    <property type="evidence" value="ECO:0000314"/>
    <property type="project" value="FlyBase"/>
</dbReference>
<dbReference type="GO" id="GO:0048477">
    <property type="term" value="P:oogenesis"/>
    <property type="evidence" value="ECO:0000304"/>
    <property type="project" value="FlyBase"/>
</dbReference>
<dbReference type="GO" id="GO:0006355">
    <property type="term" value="P:regulation of DNA-templated transcription"/>
    <property type="evidence" value="ECO:0000314"/>
    <property type="project" value="FlyBase"/>
</dbReference>
<dbReference type="GO" id="GO:1902692">
    <property type="term" value="P:regulation of neuroblast proliferation"/>
    <property type="evidence" value="ECO:0000315"/>
    <property type="project" value="UniProtKB"/>
</dbReference>
<dbReference type="GO" id="GO:0045664">
    <property type="term" value="P:regulation of neuron differentiation"/>
    <property type="evidence" value="ECO:0000315"/>
    <property type="project" value="UniProtKB"/>
</dbReference>
<dbReference type="GO" id="GO:0141006">
    <property type="term" value="P:transposable element silencing by piRNA-mediated heterochromatin formation"/>
    <property type="evidence" value="ECO:0000315"/>
    <property type="project" value="FlyBase"/>
</dbReference>
<dbReference type="FunFam" id="3.40.800.20:FF:000003">
    <property type="entry name" value="Histone deacetylase"/>
    <property type="match status" value="1"/>
</dbReference>
<dbReference type="Gene3D" id="3.40.800.20">
    <property type="entry name" value="Histone deacetylase domain"/>
    <property type="match status" value="1"/>
</dbReference>
<dbReference type="InterPro" id="IPR050284">
    <property type="entry name" value="HDAC_PDAC"/>
</dbReference>
<dbReference type="InterPro" id="IPR000286">
    <property type="entry name" value="His_deacetylse"/>
</dbReference>
<dbReference type="InterPro" id="IPR003084">
    <property type="entry name" value="His_deacetylse_1"/>
</dbReference>
<dbReference type="InterPro" id="IPR023801">
    <property type="entry name" value="His_deacetylse_dom"/>
</dbReference>
<dbReference type="InterPro" id="IPR037138">
    <property type="entry name" value="His_deacetylse_dom_sf"/>
</dbReference>
<dbReference type="InterPro" id="IPR023696">
    <property type="entry name" value="Ureohydrolase_dom_sf"/>
</dbReference>
<dbReference type="PANTHER" id="PTHR10625:SF10">
    <property type="entry name" value="HISTONE DEACETYLASE HDAC1"/>
    <property type="match status" value="1"/>
</dbReference>
<dbReference type="PANTHER" id="PTHR10625">
    <property type="entry name" value="HISTONE DEACETYLASE HDAC1-RELATED"/>
    <property type="match status" value="1"/>
</dbReference>
<dbReference type="Pfam" id="PF00850">
    <property type="entry name" value="Hist_deacetyl"/>
    <property type="match status" value="1"/>
</dbReference>
<dbReference type="PIRSF" id="PIRSF037913">
    <property type="entry name" value="His_deacetylse_1"/>
    <property type="match status" value="1"/>
</dbReference>
<dbReference type="PRINTS" id="PR01270">
    <property type="entry name" value="HDASUPER"/>
</dbReference>
<dbReference type="PRINTS" id="PR01271">
    <property type="entry name" value="HISDACETLASE"/>
</dbReference>
<dbReference type="SUPFAM" id="SSF52768">
    <property type="entry name" value="Arginase/deacetylase"/>
    <property type="match status" value="1"/>
</dbReference>
<protein>
    <recommendedName>
        <fullName evidence="14">Histone deacetylase HDAC1</fullName>
        <shortName>HD</shortName>
        <ecNumber evidence="3 12">3.5.1.98</ecNumber>
    </recommendedName>
</protein>
<keyword id="KW-0156">Chromatin regulator</keyword>
<keyword id="KW-0217">Developmental protein</keyword>
<keyword id="KW-0378">Hydrolase</keyword>
<keyword id="KW-0539">Nucleus</keyword>
<keyword id="KW-0597">Phosphoprotein</keyword>
<keyword id="KW-1185">Reference proteome</keyword>
<keyword id="KW-0678">Repressor</keyword>
<keyword id="KW-0804">Transcription</keyword>
<keyword id="KW-0805">Transcription regulation</keyword>
<gene>
    <name evidence="14 17" type="primary">HDAC1</name>
    <name evidence="15" type="synonym">Rpd3</name>
    <name evidence="17" type="ORF">CG7471</name>
</gene>
<proteinExistence type="evidence at protein level"/>
<name>HDAC1_DROME</name>
<feature type="chain" id="PRO_0000114718" description="Histone deacetylase HDAC1">
    <location>
        <begin position="1"/>
        <end position="521"/>
    </location>
</feature>
<feature type="region of interest" description="Histone deacetylase">
    <location>
        <begin position="7"/>
        <end position="319"/>
    </location>
</feature>
<feature type="region of interest" description="Disordered" evidence="2">
    <location>
        <begin position="376"/>
        <end position="521"/>
    </location>
</feature>
<feature type="compositionally biased region" description="Acidic residues" evidence="2">
    <location>
        <begin position="386"/>
        <end position="395"/>
    </location>
</feature>
<feature type="compositionally biased region" description="Basic and acidic residues" evidence="2">
    <location>
        <begin position="396"/>
        <end position="414"/>
    </location>
</feature>
<feature type="compositionally biased region" description="Basic and acidic residues" evidence="2">
    <location>
        <begin position="459"/>
        <end position="470"/>
    </location>
</feature>
<feature type="compositionally biased region" description="Low complexity" evidence="2">
    <location>
        <begin position="476"/>
        <end position="502"/>
    </location>
</feature>
<feature type="compositionally biased region" description="Gly residues" evidence="2">
    <location>
        <begin position="503"/>
        <end position="513"/>
    </location>
</feature>
<feature type="active site" evidence="1">
    <location>
        <position position="139"/>
    </location>
</feature>
<feature type="modified residue" description="Phosphoserine" evidence="10">
    <location>
        <position position="391"/>
    </location>
</feature>
<feature type="modified residue" description="Phosphoserine" evidence="10">
    <location>
        <position position="419"/>
    </location>
</feature>
<feature type="modified residue" description="Phosphoserine" evidence="10">
    <location>
        <position position="421"/>
    </location>
</feature>
<feature type="modified residue" description="Phosphoserine" evidence="10">
    <location>
        <position position="455"/>
    </location>
</feature>
<feature type="modified residue" description="Phosphothreonine" evidence="10">
    <location>
        <position position="457"/>
    </location>
</feature>
<feature type="sequence conflict" description="In Ref. 1; CAA70455." evidence="16" ref="1">
    <original>EIY</original>
    <variation>DI</variation>
    <location>
        <begin position="50"/>
        <end position="52"/>
    </location>
</feature>
<feature type="sequence conflict" description="In Ref. 1; CAA70455." evidence="16" ref="1">
    <original>S</original>
    <variation>C</variation>
    <location>
        <position position="67"/>
    </location>
</feature>
<feature type="sequence conflict" description="In Ref. 3; AAC23917." evidence="16" ref="3">
    <original>D</original>
    <variation>N</variation>
    <location>
        <position position="97"/>
    </location>
</feature>
<feature type="sequence conflict" description="In Ref. 3; AAC23917." evidence="16" ref="3">
    <original>E</original>
    <variation>D</variation>
    <location>
        <position position="106"/>
    </location>
</feature>
<feature type="sequence conflict" description="In Ref. 3; AAC23917." evidence="16" ref="3">
    <original>V</original>
    <variation>VV</variation>
    <location>
        <position position="296"/>
    </location>
</feature>
<feature type="sequence conflict" description="In Ref. 1 and 3." evidence="16" ref="1 3">
    <original>N</original>
    <variation>K</variation>
    <location>
        <position position="305"/>
    </location>
</feature>
<feature type="sequence conflict" description="In Ref. 3; AAC23917." evidence="16" ref="3">
    <original>L</original>
    <variation>V</variation>
    <location>
        <position position="371"/>
    </location>
</feature>
<feature type="sequence conflict" description="In Ref. 2 and 3." evidence="16" ref="2 3">
    <original>S</original>
    <variation>T</variation>
    <location>
        <position position="507"/>
    </location>
</feature>
<reference key="1">
    <citation type="journal article" date="1996" name="Nature">
        <title>The histone deacetylase RPD3 counteracts genomic silencing in Drosophila and yeast.</title>
        <authorList>
            <person name="de Rubertis F."/>
            <person name="Kadosh D."/>
            <person name="Henchoz S."/>
            <person name="Pauli D."/>
            <person name="Reuter G."/>
            <person name="Struhl K."/>
            <person name="Spierer P."/>
        </authorList>
    </citation>
    <scope>NUCLEOTIDE SEQUENCE [MRNA]</scope>
    <scope>FUNCTION</scope>
    <source>
        <tissue>Embryo</tissue>
    </source>
</reference>
<reference key="2">
    <citation type="journal article" date="2000" name="Genetics">
        <title>Mutational analysis of a histone deacetylase in Drosophila melanogaster: missense mutations suppress gene silencing associated with position effect variegation.</title>
        <authorList>
            <person name="Mottus R."/>
            <person name="Sobel R.E."/>
            <person name="Grigliatti T.A."/>
        </authorList>
    </citation>
    <scope>NUCLEOTIDE SEQUENCE [GENOMIC DNA]</scope>
</reference>
<reference key="3">
    <citation type="submission" date="1997-11" db="EMBL/GenBank/DDBJ databases">
        <authorList>
            <person name="Johnson C.A."/>
            <person name="White D."/>
            <person name="O'Neill L.P."/>
            <person name="Turner B.M."/>
        </authorList>
    </citation>
    <scope>NUCLEOTIDE SEQUENCE [MRNA]</scope>
</reference>
<reference key="4">
    <citation type="journal article" date="2000" name="Science">
        <title>The genome sequence of Drosophila melanogaster.</title>
        <authorList>
            <person name="Adams M.D."/>
            <person name="Celniker S.E."/>
            <person name="Holt R.A."/>
            <person name="Evans C.A."/>
            <person name="Gocayne J.D."/>
            <person name="Amanatides P.G."/>
            <person name="Scherer S.E."/>
            <person name="Li P.W."/>
            <person name="Hoskins R.A."/>
            <person name="Galle R.F."/>
            <person name="George R.A."/>
            <person name="Lewis S.E."/>
            <person name="Richards S."/>
            <person name="Ashburner M."/>
            <person name="Henderson S.N."/>
            <person name="Sutton G.G."/>
            <person name="Wortman J.R."/>
            <person name="Yandell M.D."/>
            <person name="Zhang Q."/>
            <person name="Chen L.X."/>
            <person name="Brandon R.C."/>
            <person name="Rogers Y.-H.C."/>
            <person name="Blazej R.G."/>
            <person name="Champe M."/>
            <person name="Pfeiffer B.D."/>
            <person name="Wan K.H."/>
            <person name="Doyle C."/>
            <person name="Baxter E.G."/>
            <person name="Helt G."/>
            <person name="Nelson C.R."/>
            <person name="Miklos G.L.G."/>
            <person name="Abril J.F."/>
            <person name="Agbayani A."/>
            <person name="An H.-J."/>
            <person name="Andrews-Pfannkoch C."/>
            <person name="Baldwin D."/>
            <person name="Ballew R.M."/>
            <person name="Basu A."/>
            <person name="Baxendale J."/>
            <person name="Bayraktaroglu L."/>
            <person name="Beasley E.M."/>
            <person name="Beeson K.Y."/>
            <person name="Benos P.V."/>
            <person name="Berman B.P."/>
            <person name="Bhandari D."/>
            <person name="Bolshakov S."/>
            <person name="Borkova D."/>
            <person name="Botchan M.R."/>
            <person name="Bouck J."/>
            <person name="Brokstein P."/>
            <person name="Brottier P."/>
            <person name="Burtis K.C."/>
            <person name="Busam D.A."/>
            <person name="Butler H."/>
            <person name="Cadieu E."/>
            <person name="Center A."/>
            <person name="Chandra I."/>
            <person name="Cherry J.M."/>
            <person name="Cawley S."/>
            <person name="Dahlke C."/>
            <person name="Davenport L.B."/>
            <person name="Davies P."/>
            <person name="de Pablos B."/>
            <person name="Delcher A."/>
            <person name="Deng Z."/>
            <person name="Mays A.D."/>
            <person name="Dew I."/>
            <person name="Dietz S.M."/>
            <person name="Dodson K."/>
            <person name="Doup L.E."/>
            <person name="Downes M."/>
            <person name="Dugan-Rocha S."/>
            <person name="Dunkov B.C."/>
            <person name="Dunn P."/>
            <person name="Durbin K.J."/>
            <person name="Evangelista C.C."/>
            <person name="Ferraz C."/>
            <person name="Ferriera S."/>
            <person name="Fleischmann W."/>
            <person name="Fosler C."/>
            <person name="Gabrielian A.E."/>
            <person name="Garg N.S."/>
            <person name="Gelbart W.M."/>
            <person name="Glasser K."/>
            <person name="Glodek A."/>
            <person name="Gong F."/>
            <person name="Gorrell J.H."/>
            <person name="Gu Z."/>
            <person name="Guan P."/>
            <person name="Harris M."/>
            <person name="Harris N.L."/>
            <person name="Harvey D.A."/>
            <person name="Heiman T.J."/>
            <person name="Hernandez J.R."/>
            <person name="Houck J."/>
            <person name="Hostin D."/>
            <person name="Houston K.A."/>
            <person name="Howland T.J."/>
            <person name="Wei M.-H."/>
            <person name="Ibegwam C."/>
            <person name="Jalali M."/>
            <person name="Kalush F."/>
            <person name="Karpen G.H."/>
            <person name="Ke Z."/>
            <person name="Kennison J.A."/>
            <person name="Ketchum K.A."/>
            <person name="Kimmel B.E."/>
            <person name="Kodira C.D."/>
            <person name="Kraft C.L."/>
            <person name="Kravitz S."/>
            <person name="Kulp D."/>
            <person name="Lai Z."/>
            <person name="Lasko P."/>
            <person name="Lei Y."/>
            <person name="Levitsky A.A."/>
            <person name="Li J.H."/>
            <person name="Li Z."/>
            <person name="Liang Y."/>
            <person name="Lin X."/>
            <person name="Liu X."/>
            <person name="Mattei B."/>
            <person name="McIntosh T.C."/>
            <person name="McLeod M.P."/>
            <person name="McPherson D."/>
            <person name="Merkulov G."/>
            <person name="Milshina N.V."/>
            <person name="Mobarry C."/>
            <person name="Morris J."/>
            <person name="Moshrefi A."/>
            <person name="Mount S.M."/>
            <person name="Moy M."/>
            <person name="Murphy B."/>
            <person name="Murphy L."/>
            <person name="Muzny D.M."/>
            <person name="Nelson D.L."/>
            <person name="Nelson D.R."/>
            <person name="Nelson K.A."/>
            <person name="Nixon K."/>
            <person name="Nusskern D.R."/>
            <person name="Pacleb J.M."/>
            <person name="Palazzolo M."/>
            <person name="Pittman G.S."/>
            <person name="Pan S."/>
            <person name="Pollard J."/>
            <person name="Puri V."/>
            <person name="Reese M.G."/>
            <person name="Reinert K."/>
            <person name="Remington K."/>
            <person name="Saunders R.D.C."/>
            <person name="Scheeler F."/>
            <person name="Shen H."/>
            <person name="Shue B.C."/>
            <person name="Siden-Kiamos I."/>
            <person name="Simpson M."/>
            <person name="Skupski M.P."/>
            <person name="Smith T.J."/>
            <person name="Spier E."/>
            <person name="Spradling A.C."/>
            <person name="Stapleton M."/>
            <person name="Strong R."/>
            <person name="Sun E."/>
            <person name="Svirskas R."/>
            <person name="Tector C."/>
            <person name="Turner R."/>
            <person name="Venter E."/>
            <person name="Wang A.H."/>
            <person name="Wang X."/>
            <person name="Wang Z.-Y."/>
            <person name="Wassarman D.A."/>
            <person name="Weinstock G.M."/>
            <person name="Weissenbach J."/>
            <person name="Williams S.M."/>
            <person name="Woodage T."/>
            <person name="Worley K.C."/>
            <person name="Wu D."/>
            <person name="Yang S."/>
            <person name="Yao Q.A."/>
            <person name="Ye J."/>
            <person name="Yeh R.-F."/>
            <person name="Zaveri J.S."/>
            <person name="Zhan M."/>
            <person name="Zhang G."/>
            <person name="Zhao Q."/>
            <person name="Zheng L."/>
            <person name="Zheng X.H."/>
            <person name="Zhong F.N."/>
            <person name="Zhong W."/>
            <person name="Zhou X."/>
            <person name="Zhu S.C."/>
            <person name="Zhu X."/>
            <person name="Smith H.O."/>
            <person name="Gibbs R.A."/>
            <person name="Myers E.W."/>
            <person name="Rubin G.M."/>
            <person name="Venter J.C."/>
        </authorList>
    </citation>
    <scope>NUCLEOTIDE SEQUENCE [LARGE SCALE GENOMIC DNA]</scope>
    <source>
        <strain>Berkeley</strain>
    </source>
</reference>
<reference key="5">
    <citation type="journal article" date="2002" name="Genome Biol.">
        <title>Annotation of the Drosophila melanogaster euchromatic genome: a systematic review.</title>
        <authorList>
            <person name="Misra S."/>
            <person name="Crosby M.A."/>
            <person name="Mungall C.J."/>
            <person name="Matthews B.B."/>
            <person name="Campbell K.S."/>
            <person name="Hradecky P."/>
            <person name="Huang Y."/>
            <person name="Kaminker J.S."/>
            <person name="Millburn G.H."/>
            <person name="Prochnik S.E."/>
            <person name="Smith C.D."/>
            <person name="Tupy J.L."/>
            <person name="Whitfield E.J."/>
            <person name="Bayraktaroglu L."/>
            <person name="Berman B.P."/>
            <person name="Bettencourt B.R."/>
            <person name="Celniker S.E."/>
            <person name="de Grey A.D.N.J."/>
            <person name="Drysdale R.A."/>
            <person name="Harris N.L."/>
            <person name="Richter J."/>
            <person name="Russo S."/>
            <person name="Schroeder A.J."/>
            <person name="Shu S.Q."/>
            <person name="Stapleton M."/>
            <person name="Yamada C."/>
            <person name="Ashburner M."/>
            <person name="Gelbart W.M."/>
            <person name="Rubin G.M."/>
            <person name="Lewis S.E."/>
        </authorList>
    </citation>
    <scope>GENOME REANNOTATION</scope>
    <source>
        <strain>Berkeley</strain>
    </source>
</reference>
<reference key="6">
    <citation type="journal article" date="2002" name="Genome Biol.">
        <title>A Drosophila full-length cDNA resource.</title>
        <authorList>
            <person name="Stapleton M."/>
            <person name="Carlson J.W."/>
            <person name="Brokstein P."/>
            <person name="Yu C."/>
            <person name="Champe M."/>
            <person name="George R.A."/>
            <person name="Guarin H."/>
            <person name="Kronmiller B."/>
            <person name="Pacleb J.M."/>
            <person name="Park S."/>
            <person name="Wan K.H."/>
            <person name="Rubin G.M."/>
            <person name="Celniker S.E."/>
        </authorList>
    </citation>
    <scope>NUCLEOTIDE SEQUENCE [LARGE SCALE MRNA]</scope>
    <source>
        <strain>Berkeley</strain>
        <tissue>Ovary</tissue>
    </source>
</reference>
<reference key="7">
    <citation type="journal article" date="2001" name="EMBO Rep.">
        <title>Physical and functional association of SU(VAR)3-9 and HDAC1 in Drosophila.</title>
        <authorList>
            <person name="Czermin B."/>
            <person name="Schotta G."/>
            <person name="Huelsmann B.B."/>
            <person name="Brehm A."/>
            <person name="Becker P.B."/>
            <person name="Reuter G."/>
            <person name="Imhof A."/>
        </authorList>
    </citation>
    <scope>FUNCTION</scope>
    <scope>CATALYTIC ACTIVITY</scope>
    <scope>INTERACTION WITH SU(VAR)3-9</scope>
</reference>
<reference key="8">
    <citation type="journal article" date="2003" name="Genesis">
        <title>Polycomb group proteins ESC and E(Z) are present in multiple distinct complexes that undergo dynamic changes during development.</title>
        <authorList>
            <person name="Furuyama T."/>
            <person name="Tie F."/>
            <person name="Harte P.J."/>
        </authorList>
    </citation>
    <scope>IDENTIFICATION IN AN ESC/E(Z) COMPLEX WITH CAF1-55; ESC AND E(Z)</scope>
    <scope>SUBCELLULAR LOCATION</scope>
</reference>
<reference key="9">
    <citation type="journal article" date="2002" name="Cell">
        <title>Drosophila Enhancer of zeste/ESC complexes have a histone H3 methyltransferase activity that marks chromosomal Polycomb sites.</title>
        <authorList>
            <person name="Czermin B."/>
            <person name="Melfi R."/>
            <person name="McCabe D."/>
            <person name="Seitz V."/>
            <person name="Imhof A."/>
            <person name="Pirrotta V."/>
        </authorList>
    </citation>
    <scope>FUNCTION</scope>
    <scope>IDENTIFICATION IN AN ESC/E(Z) COMPLEX WITH CAF1-55; ESC; E(Z) AND SU(Z)12</scope>
    <scope>METHYLTRANSFERASE ACTIVITY OF THE COMPLEX</scope>
</reference>
<reference key="10">
    <citation type="journal article" date="2003" name="Mol. Cell. Biol.">
        <title>A 1-megadalton ESC/E(Z) complex from Drosophila that contains polycomblike and RPD3.</title>
        <authorList>
            <person name="Tie F."/>
            <person name="Prasad-Sinha J."/>
            <person name="Birve A."/>
            <person name="Rasmuson-Lestander A."/>
            <person name="Harte P.J."/>
        </authorList>
    </citation>
    <scope>IDENTIFICATION IN AN ESC/E(Z) COMPLEX WITH CAF1-55; ESC; E(Z); PCL AND SU(Z)12</scope>
    <scope>SUBCELLULAR LOCATION</scope>
</reference>
<reference key="11">
    <citation type="journal article" date="2004" name="Genes Dev.">
        <title>Identification of a Drosophila Myb-E2F2/RBF transcriptional repressor complex.</title>
        <authorList>
            <person name="Lewis P.W."/>
            <person name="Beall E.L."/>
            <person name="Fleischer T.C."/>
            <person name="Georlette D."/>
            <person name="Link A.J."/>
            <person name="Botchan M.R."/>
        </authorList>
    </citation>
    <scope>FUNCTION</scope>
    <scope>IDENTIFICATION IN THE DREAM COMPLEX</scope>
</reference>
<reference key="12">
    <citation type="journal article" date="2004" name="J. Neurosci.">
        <title>A conserved role but different partners for the transcriptional corepressor CoREST in fly and mammalian nervous system formation.</title>
        <authorList>
            <person name="Dallman J.E."/>
            <person name="Allopenna J."/>
            <person name="Bassett A."/>
            <person name="Travers A."/>
            <person name="Mandel G."/>
        </authorList>
    </citation>
    <scope>FUNCTION</scope>
    <scope>INTERACTION WITH COREST</scope>
</reference>
<reference key="13">
    <citation type="journal article" date="2008" name="J. Proteome Res.">
        <title>Phosphoproteome analysis of Drosophila melanogaster embryos.</title>
        <authorList>
            <person name="Zhai B."/>
            <person name="Villen J."/>
            <person name="Beausoleil S.A."/>
            <person name="Mintseris J."/>
            <person name="Gygi S.P."/>
        </authorList>
    </citation>
    <scope>PHOSPHORYLATION [LARGE SCALE ANALYSIS] AT SER-391; SER-419; SER-421; SER-455 AND THR-457</scope>
    <scope>IDENTIFICATION BY MASS SPECTROMETRY</scope>
    <source>
        <tissue>Embryo</tissue>
    </source>
</reference>
<reference key="14">
    <citation type="journal article" date="2008" name="Mol. Cell. Biol.">
        <title>dCHD3, a novel ATP-dependent chromatin remodeler associated with sites of active transcription.</title>
        <authorList>
            <person name="Murawska M."/>
            <person name="Kunert N."/>
            <person name="van Vugt J."/>
            <person name="Laengst G."/>
            <person name="Kremmer E."/>
            <person name="Logie C."/>
            <person name="Brehm A."/>
        </authorList>
    </citation>
    <scope>INTERACTION WITH MI-2</scope>
</reference>
<reference evidence="16" key="15">
    <citation type="journal article" date="2015" name="PLoS Genet.">
        <title>An Interaction between RRP6 and SU(VAR)3-9 Targets RRP6 to Heterochromatin and Contributes to Heterochromatin Maintenance in Drosophila melanogaster.</title>
        <authorList>
            <person name="Eberle A.B."/>
            <person name="Jordan-Pla A."/>
            <person name="Ganez-Zapater A."/>
            <person name="Hessle V."/>
            <person name="Silberberg G."/>
            <person name="von Euler A."/>
            <person name="Silverstein R.A."/>
            <person name="Visa N."/>
        </authorList>
    </citation>
    <scope>INTERACTION WITH RRP6</scope>
</reference>
<reference key="16">
    <citation type="journal article" date="2017" name="Dev. Cell">
        <title>An Hdac1/Rpd3-poised circuit balances continual self-renewal and rapid restriction of developmental potential during asymmetric stem cell division.</title>
        <authorList>
            <person name="Janssens D.H."/>
            <person name="Hamm D.C."/>
            <person name="Anhezini L."/>
            <person name="Xiao Q."/>
            <person name="Siller K.H."/>
            <person name="Siegrist S.E."/>
            <person name="Harrison M.M."/>
            <person name="Lee C.Y."/>
        </authorList>
    </citation>
    <scope>FUNCTION</scope>
    <scope>CATALYTIC ACTIVITY</scope>
    <scope>DISRUPTION PHENOTYPE</scope>
</reference>
<accession>Q94517</accession>
<accession>O17429</accession>
<accession>O77213</accession>
<accession>Q9VZA1</accession>